<evidence type="ECO:0000250" key="1"/>
<evidence type="ECO:0000305" key="2"/>
<reference key="1">
    <citation type="journal article" date="1996" name="N. Z. J. Crop Hortic. Sci.">
        <title>A stress-, pathogenesis-, and allergen-related cDNA in apple fruit is also ripening-related.</title>
        <authorList>
            <person name="Atkinson R.G."/>
            <person name="Perry J."/>
            <person name="Matsui T."/>
            <person name="Ross G.S."/>
            <person name="MacRae E.A."/>
        </authorList>
    </citation>
    <scope>NUCLEOTIDE SEQUENCE [MRNA]</scope>
    <source>
        <strain>cv. Golden Delicious</strain>
        <tissue>Pericarp</tissue>
    </source>
</reference>
<reference key="2">
    <citation type="submission" date="1998-06" db="EMBL/GenBank/DDBJ databases">
        <title>Cloning and characterization of isoforms of the major apple allergen, Mal d 1, derived from different apple strains.</title>
        <authorList>
            <person name="Son D.Y."/>
            <person name="Haustein D."/>
            <person name="Vieths S."/>
        </authorList>
    </citation>
    <scope>NUCLEOTIDE SEQUENCE [MRNA]</scope>
    <source>
        <strain>cv. Idared</strain>
    </source>
</reference>
<reference key="3">
    <citation type="submission" date="1997-08" db="EMBL/GenBank/DDBJ databases">
        <authorList>
            <person name="Puehringer H."/>
            <person name="Watillon B."/>
            <person name="Laimer da Camara Machado M."/>
        </authorList>
    </citation>
    <scope>NUCLEOTIDE SEQUENCE [GENOMIC DNA]</scope>
    <source>
        <strain>cv. McIntosh 'Wijcik'</strain>
        <tissue>Leaf</tissue>
    </source>
</reference>
<proteinExistence type="evidence at protein level"/>
<sequence length="159" mass="17539">MGVYTFENEYTSEIPPPRLFKAFVLDADNLIPKIAPQAIKHAEILEGDGGPGTIKKITFGEGSQYGYVKHKIDSVDEANYSYAYTLIEGDALTDTIEKVSYETKLVASGSGSIIKSISHYHTKGDVEIKEEHVKAGKEKAHGLFKLIESYLKGHPDAYN</sequence>
<organism>
    <name type="scientific">Malus domestica</name>
    <name type="common">Apple</name>
    <name type="synonym">Pyrus malus</name>
    <dbReference type="NCBI Taxonomy" id="3750"/>
    <lineage>
        <taxon>Eukaryota</taxon>
        <taxon>Viridiplantae</taxon>
        <taxon>Streptophyta</taxon>
        <taxon>Embryophyta</taxon>
        <taxon>Tracheophyta</taxon>
        <taxon>Spermatophyta</taxon>
        <taxon>Magnoliopsida</taxon>
        <taxon>eudicotyledons</taxon>
        <taxon>Gunneridae</taxon>
        <taxon>Pentapetalae</taxon>
        <taxon>rosids</taxon>
        <taxon>fabids</taxon>
        <taxon>Rosales</taxon>
        <taxon>Rosaceae</taxon>
        <taxon>Amygdaloideae</taxon>
        <taxon>Maleae</taxon>
        <taxon>Malus</taxon>
    </lineage>
</organism>
<protein>
    <recommendedName>
        <fullName>Major allergen Mal d 1</fullName>
    </recommendedName>
    <alternativeName>
        <fullName>AP15</fullName>
    </alternativeName>
    <alternativeName>
        <fullName>Allergen Mal d I</fullName>
    </alternativeName>
    <allergenName>Mal d 1</allergenName>
</protein>
<keyword id="KW-0020">Allergen</keyword>
<keyword id="KW-0568">Pathogenesis-related protein</keyword>
<keyword id="KW-0611">Plant defense</keyword>
<comment type="allergen">
    <text>Causes an allergic reaction in human.</text>
</comment>
<comment type="similarity">
    <text evidence="2">Belongs to the BetVI family.</text>
</comment>
<accession>Q40280</accession>
<accession>O22517</accession>
<dbReference type="EMBL" id="L42952">
    <property type="protein sequence ID" value="AAB01362.1"/>
    <property type="molecule type" value="mRNA"/>
</dbReference>
<dbReference type="EMBL" id="AF074721">
    <property type="protein sequence ID" value="AAC26136.1"/>
    <property type="molecule type" value="mRNA"/>
</dbReference>
<dbReference type="EMBL" id="AF020542">
    <property type="protein sequence ID" value="AAD13683.1"/>
    <property type="molecule type" value="Genomic_DNA"/>
</dbReference>
<dbReference type="RefSeq" id="NP_001281292.1">
    <property type="nucleotide sequence ID" value="NM_001294363.1"/>
</dbReference>
<dbReference type="SMR" id="Q40280"/>
<dbReference type="Allergome" id="1456">
    <property type="allergen name" value="Mal d 1.0201"/>
</dbReference>
<dbReference type="Allergome" id="1461">
    <property type="allergen name" value="Mal d 1.0206"/>
</dbReference>
<dbReference type="Allergome" id="464">
    <property type="allergen name" value="Mal d 1"/>
</dbReference>
<dbReference type="EnsemblPlants" id="mRNA:MD16G0142600">
    <property type="protein sequence ID" value="mRNA:MD16G0142600"/>
    <property type="gene ID" value="MD16G0142600"/>
</dbReference>
<dbReference type="GeneID" id="103425638"/>
<dbReference type="Gramene" id="mRNA:MD16G0142600">
    <property type="protein sequence ID" value="mRNA:MD16G0142600"/>
    <property type="gene ID" value="MD16G0142600"/>
</dbReference>
<dbReference type="KEGG" id="mdm:103425638"/>
<dbReference type="OrthoDB" id="1858121at2759"/>
<dbReference type="GO" id="GO:0005737">
    <property type="term" value="C:cytoplasm"/>
    <property type="evidence" value="ECO:0007669"/>
    <property type="project" value="TreeGrafter"/>
</dbReference>
<dbReference type="GO" id="GO:0005634">
    <property type="term" value="C:nucleus"/>
    <property type="evidence" value="ECO:0007669"/>
    <property type="project" value="TreeGrafter"/>
</dbReference>
<dbReference type="GO" id="GO:0010427">
    <property type="term" value="F:abscisic acid binding"/>
    <property type="evidence" value="ECO:0007669"/>
    <property type="project" value="InterPro"/>
</dbReference>
<dbReference type="GO" id="GO:0004864">
    <property type="term" value="F:protein phosphatase inhibitor activity"/>
    <property type="evidence" value="ECO:0007669"/>
    <property type="project" value="InterPro"/>
</dbReference>
<dbReference type="GO" id="GO:0038023">
    <property type="term" value="F:signaling receptor activity"/>
    <property type="evidence" value="ECO:0007669"/>
    <property type="project" value="InterPro"/>
</dbReference>
<dbReference type="GO" id="GO:0009738">
    <property type="term" value="P:abscisic acid-activated signaling pathway"/>
    <property type="evidence" value="ECO:0007669"/>
    <property type="project" value="InterPro"/>
</dbReference>
<dbReference type="GO" id="GO:0006952">
    <property type="term" value="P:defense response"/>
    <property type="evidence" value="ECO:0007669"/>
    <property type="project" value="UniProtKB-KW"/>
</dbReference>
<dbReference type="CDD" id="cd07816">
    <property type="entry name" value="Bet_v1-like"/>
    <property type="match status" value="1"/>
</dbReference>
<dbReference type="FunFam" id="3.30.530.20:FF:000007">
    <property type="entry name" value="Major pollen allergen Bet v 1-A"/>
    <property type="match status" value="1"/>
</dbReference>
<dbReference type="Gene3D" id="3.30.530.20">
    <property type="match status" value="1"/>
</dbReference>
<dbReference type="InterPro" id="IPR000916">
    <property type="entry name" value="Bet_v_I/MLP"/>
</dbReference>
<dbReference type="InterPro" id="IPR024949">
    <property type="entry name" value="Bet_v_I_allergen"/>
</dbReference>
<dbReference type="InterPro" id="IPR050279">
    <property type="entry name" value="Plant_def-hormone_signal"/>
</dbReference>
<dbReference type="InterPro" id="IPR023393">
    <property type="entry name" value="START-like_dom_sf"/>
</dbReference>
<dbReference type="PANTHER" id="PTHR31213">
    <property type="entry name" value="OS08G0374000 PROTEIN-RELATED"/>
    <property type="match status" value="1"/>
</dbReference>
<dbReference type="PANTHER" id="PTHR31213:SF55">
    <property type="entry name" value="STRESS-INDUCED PROTEIN SAM22"/>
    <property type="match status" value="1"/>
</dbReference>
<dbReference type="Pfam" id="PF00407">
    <property type="entry name" value="Bet_v_1"/>
    <property type="match status" value="1"/>
</dbReference>
<dbReference type="PRINTS" id="PR00634">
    <property type="entry name" value="BETALLERGEN"/>
</dbReference>
<dbReference type="SUPFAM" id="SSF55961">
    <property type="entry name" value="Bet v1-like"/>
    <property type="match status" value="1"/>
</dbReference>
<dbReference type="PROSITE" id="PS00451">
    <property type="entry name" value="PATHOGENESIS_BETVI"/>
    <property type="match status" value="1"/>
</dbReference>
<feature type="initiator methionine" description="Removed" evidence="1">
    <location>
        <position position="1"/>
    </location>
</feature>
<feature type="chain" id="PRO_0000154191" description="Major allergen Mal d 1">
    <location>
        <begin position="2"/>
        <end position="159"/>
    </location>
</feature>
<feature type="sequence variant">
    <original>A</original>
    <variation>G</variation>
    <location>
        <position position="22"/>
    </location>
</feature>
<name>MAL12_MALDO</name>